<organism>
    <name type="scientific">Rhizobium leguminosarum bv. trifolii (strain WSM2304)</name>
    <dbReference type="NCBI Taxonomy" id="395492"/>
    <lineage>
        <taxon>Bacteria</taxon>
        <taxon>Pseudomonadati</taxon>
        <taxon>Pseudomonadota</taxon>
        <taxon>Alphaproteobacteria</taxon>
        <taxon>Hyphomicrobiales</taxon>
        <taxon>Rhizobiaceae</taxon>
        <taxon>Rhizobium/Agrobacterium group</taxon>
        <taxon>Rhizobium</taxon>
    </lineage>
</organism>
<accession>B5ZYV3</accession>
<proteinExistence type="inferred from homology"/>
<keyword id="KW-1185">Reference proteome</keyword>
<keyword id="KW-0687">Ribonucleoprotein</keyword>
<keyword id="KW-0689">Ribosomal protein</keyword>
<dbReference type="EMBL" id="CP001191">
    <property type="protein sequence ID" value="ACI54644.1"/>
    <property type="molecule type" value="Genomic_DNA"/>
</dbReference>
<dbReference type="RefSeq" id="WP_003547566.1">
    <property type="nucleotide sequence ID" value="NC_011369.1"/>
</dbReference>
<dbReference type="SMR" id="B5ZYV3"/>
<dbReference type="STRING" id="395492.Rleg2_1350"/>
<dbReference type="GeneID" id="91148146"/>
<dbReference type="KEGG" id="rlt:Rleg2_1350"/>
<dbReference type="eggNOG" id="COG1841">
    <property type="taxonomic scope" value="Bacteria"/>
</dbReference>
<dbReference type="HOGENOM" id="CLU_131047_1_2_5"/>
<dbReference type="Proteomes" id="UP000008330">
    <property type="component" value="Chromosome"/>
</dbReference>
<dbReference type="GO" id="GO:0022625">
    <property type="term" value="C:cytosolic large ribosomal subunit"/>
    <property type="evidence" value="ECO:0007669"/>
    <property type="project" value="TreeGrafter"/>
</dbReference>
<dbReference type="GO" id="GO:0003735">
    <property type="term" value="F:structural constituent of ribosome"/>
    <property type="evidence" value="ECO:0007669"/>
    <property type="project" value="InterPro"/>
</dbReference>
<dbReference type="GO" id="GO:0006412">
    <property type="term" value="P:translation"/>
    <property type="evidence" value="ECO:0007669"/>
    <property type="project" value="UniProtKB-UniRule"/>
</dbReference>
<dbReference type="CDD" id="cd01658">
    <property type="entry name" value="Ribosomal_L30"/>
    <property type="match status" value="1"/>
</dbReference>
<dbReference type="Gene3D" id="3.30.1390.20">
    <property type="entry name" value="Ribosomal protein L30, ferredoxin-like fold domain"/>
    <property type="match status" value="1"/>
</dbReference>
<dbReference type="HAMAP" id="MF_01371_B">
    <property type="entry name" value="Ribosomal_uL30_B"/>
    <property type="match status" value="1"/>
</dbReference>
<dbReference type="InterPro" id="IPR036919">
    <property type="entry name" value="Ribo_uL30_ferredoxin-like_sf"/>
</dbReference>
<dbReference type="InterPro" id="IPR005996">
    <property type="entry name" value="Ribosomal_uL30_bac-type"/>
</dbReference>
<dbReference type="InterPro" id="IPR016082">
    <property type="entry name" value="Ribosomal_uL30_ferredoxin-like"/>
</dbReference>
<dbReference type="NCBIfam" id="TIGR01308">
    <property type="entry name" value="rpmD_bact"/>
    <property type="match status" value="1"/>
</dbReference>
<dbReference type="PANTHER" id="PTHR15892:SF2">
    <property type="entry name" value="LARGE RIBOSOMAL SUBUNIT PROTEIN UL30M"/>
    <property type="match status" value="1"/>
</dbReference>
<dbReference type="PANTHER" id="PTHR15892">
    <property type="entry name" value="MITOCHONDRIAL RIBOSOMAL PROTEIN L30"/>
    <property type="match status" value="1"/>
</dbReference>
<dbReference type="Pfam" id="PF00327">
    <property type="entry name" value="Ribosomal_L30"/>
    <property type="match status" value="1"/>
</dbReference>
<dbReference type="PIRSF" id="PIRSF002211">
    <property type="entry name" value="Ribosomal_L30_bac-type"/>
    <property type="match status" value="1"/>
</dbReference>
<dbReference type="SUPFAM" id="SSF55129">
    <property type="entry name" value="Ribosomal protein L30p/L7e"/>
    <property type="match status" value="1"/>
</dbReference>
<evidence type="ECO:0000255" key="1">
    <source>
        <dbReference type="HAMAP-Rule" id="MF_01371"/>
    </source>
</evidence>
<evidence type="ECO:0000305" key="2"/>
<comment type="subunit">
    <text evidence="1">Part of the 50S ribosomal subunit.</text>
</comment>
<comment type="similarity">
    <text evidence="1">Belongs to the universal ribosomal protein uL30 family.</text>
</comment>
<gene>
    <name evidence="1" type="primary">rpmD</name>
    <name type="ordered locus">Rleg2_1350</name>
</gene>
<name>RL30_RHILW</name>
<reference key="1">
    <citation type="journal article" date="2010" name="Stand. Genomic Sci.">
        <title>Complete genome sequence of Rhizobium leguminosarum bv trifolii strain WSM2304, an effective microsymbiont of the South American clover Trifolium polymorphum.</title>
        <authorList>
            <person name="Reeve W."/>
            <person name="O'Hara G."/>
            <person name="Chain P."/>
            <person name="Ardley J."/>
            <person name="Brau L."/>
            <person name="Nandesena K."/>
            <person name="Tiwari R."/>
            <person name="Malfatti S."/>
            <person name="Kiss H."/>
            <person name="Lapidus A."/>
            <person name="Copeland A."/>
            <person name="Nolan M."/>
            <person name="Land M."/>
            <person name="Ivanova N."/>
            <person name="Mavromatis K."/>
            <person name="Markowitz V."/>
            <person name="Kyrpides N."/>
            <person name="Melino V."/>
            <person name="Denton M."/>
            <person name="Yates R."/>
            <person name="Howieson J."/>
        </authorList>
    </citation>
    <scope>NUCLEOTIDE SEQUENCE [LARGE SCALE GENOMIC DNA]</scope>
    <source>
        <strain>WSM2304</strain>
    </source>
</reference>
<sequence>MAKATKKAEAKTVTIEQIGSPIRRPDVQQRTLIGLGLNKMHRRRTLEDTPSVRGMIRAVQHLVRVVDEK</sequence>
<feature type="chain" id="PRO_1000144708" description="Large ribosomal subunit protein uL30">
    <location>
        <begin position="1"/>
        <end position="69"/>
    </location>
</feature>
<protein>
    <recommendedName>
        <fullName evidence="1">Large ribosomal subunit protein uL30</fullName>
    </recommendedName>
    <alternativeName>
        <fullName evidence="2">50S ribosomal protein L30</fullName>
    </alternativeName>
</protein>